<evidence type="ECO:0000250" key="1"/>
<evidence type="ECO:0000250" key="2">
    <source>
        <dbReference type="UniProtKB" id="P08648"/>
    </source>
</evidence>
<evidence type="ECO:0000255" key="3"/>
<evidence type="ECO:0000255" key="4">
    <source>
        <dbReference type="PROSITE-ProRule" id="PRU00219"/>
    </source>
</evidence>
<evidence type="ECO:0000255" key="5">
    <source>
        <dbReference type="PROSITE-ProRule" id="PRU00803"/>
    </source>
</evidence>
<evidence type="ECO:0000269" key="6">
    <source>
    </source>
</evidence>
<evidence type="ECO:0000269" key="7">
    <source>
    </source>
</evidence>
<evidence type="ECO:0000269" key="8">
    <source>
    </source>
</evidence>
<evidence type="ECO:0000269" key="9">
    <source>
    </source>
</evidence>
<evidence type="ECO:0000305" key="10"/>
<evidence type="ECO:0007829" key="11">
    <source>
        <dbReference type="PDB" id="1PT6"/>
    </source>
</evidence>
<evidence type="ECO:0007829" key="12">
    <source>
        <dbReference type="PDB" id="2L8S"/>
    </source>
</evidence>
<evidence type="ECO:0007829" key="13">
    <source>
        <dbReference type="PDB" id="5HGJ"/>
    </source>
</evidence>
<gene>
    <name type="primary">ITGA1</name>
</gene>
<protein>
    <recommendedName>
        <fullName>Integrin alpha-1</fullName>
    </recommendedName>
    <alternativeName>
        <fullName>CD49 antigen-like family member A</fullName>
    </alternativeName>
    <alternativeName>
        <fullName>Laminin and collagen receptor</fullName>
    </alternativeName>
    <alternativeName>
        <fullName>VLA-1</fullName>
    </alternativeName>
    <cdAntigenName>CD49a</cdAntigenName>
</protein>
<accession>P56199</accession>
<accession>B2RNU0</accession>
<proteinExistence type="evidence at protein level"/>
<feature type="signal peptide" evidence="3">
    <location>
        <begin position="1"/>
        <end position="28"/>
    </location>
</feature>
<feature type="chain" id="PRO_0000174215" description="Integrin alpha-1">
    <location>
        <begin position="29"/>
        <end position="1179"/>
    </location>
</feature>
<feature type="topological domain" description="Extracellular" evidence="3">
    <location>
        <begin position="29"/>
        <end position="1141"/>
    </location>
</feature>
<feature type="transmembrane region" description="Helical" evidence="3">
    <location>
        <begin position="1142"/>
        <end position="1164"/>
    </location>
</feature>
<feature type="topological domain" description="Cytoplasmic" evidence="3">
    <location>
        <begin position="1165"/>
        <end position="1179"/>
    </location>
</feature>
<feature type="repeat" description="FG-GAP 1" evidence="5">
    <location>
        <begin position="30"/>
        <end position="91"/>
    </location>
</feature>
<feature type="repeat" description="FG-GAP 2" evidence="5">
    <location>
        <begin position="101"/>
        <end position="160"/>
    </location>
</feature>
<feature type="domain" description="VWFA" evidence="4">
    <location>
        <begin position="161"/>
        <end position="360"/>
    </location>
</feature>
<feature type="repeat" description="FG-GAP 3" evidence="5">
    <location>
        <begin position="365"/>
        <end position="417"/>
    </location>
</feature>
<feature type="repeat" description="FG-GAP 4" evidence="5">
    <location>
        <begin position="422"/>
        <end position="475"/>
    </location>
</feature>
<feature type="repeat" description="FG-GAP 5" evidence="5">
    <location>
        <begin position="476"/>
        <end position="538"/>
    </location>
</feature>
<feature type="repeat" description="FG-GAP 6" evidence="5">
    <location>
        <begin position="557"/>
        <end position="615"/>
    </location>
</feature>
<feature type="repeat" description="FG-GAP 7" evidence="5">
    <location>
        <begin position="619"/>
        <end position="679"/>
    </location>
</feature>
<feature type="short sequence motif" description="GFFKR motif">
    <location>
        <begin position="1167"/>
        <end position="1171"/>
    </location>
</feature>
<feature type="binding site" evidence="2">
    <location>
        <position position="498"/>
    </location>
    <ligand>
        <name>Ca(2+)</name>
        <dbReference type="ChEBI" id="CHEBI:29108"/>
        <label>1</label>
    </ligand>
</feature>
<feature type="binding site" evidence="2">
    <location>
        <position position="500"/>
    </location>
    <ligand>
        <name>Ca(2+)</name>
        <dbReference type="ChEBI" id="CHEBI:29108"/>
        <label>1</label>
    </ligand>
</feature>
<feature type="binding site" evidence="2">
    <location>
        <position position="502"/>
    </location>
    <ligand>
        <name>Ca(2+)</name>
        <dbReference type="ChEBI" id="CHEBI:29108"/>
        <label>1</label>
    </ligand>
</feature>
<feature type="binding site" evidence="2">
    <location>
        <position position="506"/>
    </location>
    <ligand>
        <name>Ca(2+)</name>
        <dbReference type="ChEBI" id="CHEBI:29108"/>
        <label>1</label>
    </ligand>
</feature>
<feature type="binding site" evidence="2">
    <location>
        <position position="580"/>
    </location>
    <ligand>
        <name>Ca(2+)</name>
        <dbReference type="ChEBI" id="CHEBI:29108"/>
        <label>2</label>
    </ligand>
</feature>
<feature type="binding site" evidence="2">
    <location>
        <position position="582"/>
    </location>
    <ligand>
        <name>Ca(2+)</name>
        <dbReference type="ChEBI" id="CHEBI:29108"/>
        <label>2</label>
    </ligand>
</feature>
<feature type="binding site" evidence="2">
    <location>
        <position position="584"/>
    </location>
    <ligand>
        <name>Ca(2+)</name>
        <dbReference type="ChEBI" id="CHEBI:29108"/>
        <label>2</label>
    </ligand>
</feature>
<feature type="binding site" evidence="2">
    <location>
        <position position="588"/>
    </location>
    <ligand>
        <name>Ca(2+)</name>
        <dbReference type="ChEBI" id="CHEBI:29108"/>
        <label>2</label>
    </ligand>
</feature>
<feature type="binding site" evidence="2">
    <location>
        <position position="642"/>
    </location>
    <ligand>
        <name>Ca(2+)</name>
        <dbReference type="ChEBI" id="CHEBI:29108"/>
        <label>3</label>
    </ligand>
</feature>
<feature type="binding site" evidence="2">
    <location>
        <position position="644"/>
    </location>
    <ligand>
        <name>Ca(2+)</name>
        <dbReference type="ChEBI" id="CHEBI:29108"/>
        <label>3</label>
    </ligand>
</feature>
<feature type="binding site" evidence="2">
    <location>
        <position position="646"/>
    </location>
    <ligand>
        <name>Ca(2+)</name>
        <dbReference type="ChEBI" id="CHEBI:29108"/>
        <label>3</label>
    </ligand>
</feature>
<feature type="binding site" evidence="2">
    <location>
        <position position="650"/>
    </location>
    <ligand>
        <name>Ca(2+)</name>
        <dbReference type="ChEBI" id="CHEBI:29108"/>
        <label>3</label>
    </ligand>
</feature>
<feature type="glycosylation site" description="N-linked (GlcNAc...) asparagine" evidence="3">
    <location>
        <position position="74"/>
    </location>
</feature>
<feature type="glycosylation site" description="N-linked (GlcNAc...) asparagine" evidence="9">
    <location>
        <position position="100"/>
    </location>
</feature>
<feature type="glycosylation site" description="N-linked (GlcNAc...) asparagine" evidence="9">
    <location>
        <position position="105"/>
    </location>
</feature>
<feature type="glycosylation site" description="N-linked (GlcNAc...) asparagine" evidence="3">
    <location>
        <position position="112"/>
    </location>
</feature>
<feature type="glycosylation site" description="N-linked (GlcNAc...) asparagine" evidence="9">
    <location>
        <position position="217"/>
    </location>
</feature>
<feature type="glycosylation site" description="N-linked (GlcNAc...) asparagine" evidence="3">
    <location>
        <position position="317"/>
    </location>
</feature>
<feature type="glycosylation site" description="N-linked (GlcNAc...) asparagine" evidence="9">
    <location>
        <position position="341"/>
    </location>
</feature>
<feature type="glycosylation site" description="N-linked (GlcNAc...) asparagine" evidence="3">
    <location>
        <position position="402"/>
    </location>
</feature>
<feature type="glycosylation site" description="N-linked (GlcNAc...) asparagine" evidence="9">
    <location>
        <position position="418"/>
    </location>
</feature>
<feature type="glycosylation site" description="N-linked (GlcNAc...) asparagine" evidence="9">
    <location>
        <position position="460"/>
    </location>
</feature>
<feature type="glycosylation site" description="N-linked (GlcNAc...) asparagine" evidence="7 9">
    <location>
        <position position="532"/>
    </location>
</feature>
<feature type="glycosylation site" description="N-linked (GlcNAc...) asparagine" evidence="3">
    <location>
        <position position="699"/>
    </location>
</feature>
<feature type="glycosylation site" description="N-linked (GlcNAc...) asparagine" evidence="3">
    <location>
        <position position="748"/>
    </location>
</feature>
<feature type="glycosylation site" description="N-linked (GlcNAc...) asparagine" evidence="9">
    <location>
        <position position="780"/>
    </location>
</feature>
<feature type="glycosylation site" description="N-linked (GlcNAc...) asparagine" evidence="9">
    <location>
        <position position="840"/>
    </location>
</feature>
<feature type="glycosylation site" description="N-linked (GlcNAc...) asparagine" evidence="3">
    <location>
        <position position="883"/>
    </location>
</feature>
<feature type="glycosylation site" description="N-linked (GlcNAc...) asparagine" evidence="3">
    <location>
        <position position="908"/>
    </location>
</feature>
<feature type="glycosylation site" description="N-linked (GlcNAc...) asparagine" evidence="3">
    <location>
        <position position="915"/>
    </location>
</feature>
<feature type="glycosylation site" description="N-linked (GlcNAc...) asparagine" evidence="3">
    <location>
        <position position="939"/>
    </location>
</feature>
<feature type="glycosylation site" description="N-linked (GlcNAc...) asparagine" evidence="9">
    <location>
        <position position="966"/>
    </location>
</feature>
<feature type="glycosylation site" description="N-linked (GlcNAc...) asparagine" evidence="9">
    <location>
        <position position="974"/>
    </location>
</feature>
<feature type="glycosylation site" description="N-linked (GlcNAc...) asparagine" evidence="9">
    <location>
        <position position="1008"/>
    </location>
</feature>
<feature type="glycosylation site" description="N-linked (GlcNAc...) asparagine" evidence="3">
    <location>
        <position position="1073"/>
    </location>
</feature>
<feature type="glycosylation site" description="N-linked (GlcNAc...) asparagine" evidence="3">
    <location>
        <position position="1083"/>
    </location>
</feature>
<feature type="glycosylation site" description="N-linked (GlcNAc...) asparagine" evidence="3">
    <location>
        <position position="1102"/>
    </location>
</feature>
<feature type="glycosylation site" description="N-linked (GlcNAc...) asparagine" evidence="3">
    <location>
        <position position="1113"/>
    </location>
</feature>
<feature type="disulfide bond" evidence="1">
    <location>
        <begin position="82"/>
        <end position="92"/>
    </location>
</feature>
<feature type="disulfide bond" evidence="1">
    <location>
        <begin position="688"/>
        <end position="697"/>
    </location>
</feature>
<feature type="disulfide bond" evidence="1">
    <location>
        <begin position="703"/>
        <end position="756"/>
    </location>
</feature>
<feature type="disulfide bond" evidence="1">
    <location>
        <begin position="808"/>
        <end position="814"/>
    </location>
</feature>
<feature type="disulfide bond" evidence="1">
    <location>
        <begin position="878"/>
        <end position="886"/>
    </location>
</feature>
<feature type="disulfide bond" evidence="1">
    <location>
        <begin position="1030"/>
        <end position="1062"/>
    </location>
</feature>
<feature type="disulfide bond" evidence="1">
    <location>
        <begin position="1065"/>
        <end position="1072"/>
    </location>
</feature>
<feature type="sequence variant" id="VAR_034022" description="In dbSNP:rs4145748.">
    <original>T</original>
    <variation>M</variation>
    <location>
        <position position="480"/>
    </location>
</feature>
<feature type="sequence variant" id="VAR_049630" description="In dbSNP:rs2279587.">
    <original>V</original>
    <variation>I</variation>
    <location>
        <position position="670"/>
    </location>
</feature>
<feature type="sequence variant" id="VAR_034023" description="In dbSNP:rs12520591.">
    <original>I</original>
    <variation>M</variation>
    <location>
        <position position="961"/>
    </location>
</feature>
<feature type="sequence variant" id="VAR_034024" description="In dbSNP:rs988574.">
    <original>E</original>
    <variation>G</variation>
    <location>
        <position position="1108"/>
    </location>
</feature>
<feature type="sequence conflict" description="In Ref. 3." evidence="10" ref="3">
    <original>E</original>
    <variation>K</variation>
    <location>
        <position position="198"/>
    </location>
</feature>
<feature type="sequence conflict" description="In Ref. 3." evidence="10" ref="3">
    <original>I</original>
    <variation>T</variation>
    <location>
        <position position="254"/>
    </location>
</feature>
<feature type="sequence conflict" description="In Ref. 3." evidence="10" ref="3">
    <original>D</original>
    <variation>E</variation>
    <location>
        <position position="705"/>
    </location>
</feature>
<feature type="strand" evidence="13">
    <location>
        <begin position="171"/>
        <end position="178"/>
    </location>
</feature>
<feature type="helix" evidence="13">
    <location>
        <begin position="187"/>
        <end position="197"/>
    </location>
</feature>
<feature type="strand" evidence="13">
    <location>
        <begin position="206"/>
        <end position="222"/>
    </location>
</feature>
<feature type="turn" evidence="11">
    <location>
        <begin position="224"/>
        <end position="226"/>
    </location>
</feature>
<feature type="helix" evidence="13">
    <location>
        <begin position="230"/>
        <end position="238"/>
    </location>
</feature>
<feature type="helix" evidence="13">
    <location>
        <begin position="250"/>
        <end position="259"/>
    </location>
</feature>
<feature type="turn" evidence="13">
    <location>
        <begin position="260"/>
        <end position="262"/>
    </location>
</feature>
<feature type="helix" evidence="13">
    <location>
        <begin position="264"/>
        <end position="266"/>
    </location>
</feature>
<feature type="strand" evidence="13">
    <location>
        <begin position="272"/>
        <end position="282"/>
    </location>
</feature>
<feature type="helix" evidence="13">
    <location>
        <begin position="287"/>
        <end position="289"/>
    </location>
</feature>
<feature type="helix" evidence="13">
    <location>
        <begin position="290"/>
        <end position="299"/>
    </location>
</feature>
<feature type="strand" evidence="13">
    <location>
        <begin position="302"/>
        <end position="309"/>
    </location>
</feature>
<feature type="helix" evidence="13">
    <location>
        <begin position="311"/>
        <end position="315"/>
    </location>
</feature>
<feature type="helix" evidence="13">
    <location>
        <begin position="321"/>
        <end position="330"/>
    </location>
</feature>
<feature type="helix" evidence="13">
    <location>
        <begin position="335"/>
        <end position="338"/>
    </location>
</feature>
<feature type="strand" evidence="13">
    <location>
        <begin position="339"/>
        <end position="344"/>
    </location>
</feature>
<feature type="helix" evidence="13">
    <location>
        <begin position="345"/>
        <end position="351"/>
    </location>
</feature>
<feature type="helix" evidence="13">
    <location>
        <begin position="352"/>
        <end position="359"/>
    </location>
</feature>
<feature type="helix" evidence="12">
    <location>
        <begin position="1143"/>
        <end position="1168"/>
    </location>
</feature>
<sequence length="1179" mass="130848">MAPRPRARPGVAVACCWLLTVVLRCCVSFNVDVKNSMTFSGPVEDMFGYTVQQYENEEGKWVLIGSPLVGQPKNRTGDVYKCPVGRGESLPCVKLDLPVNTSIPNVTEVKENMTFGSTLVTNPNGGFLACGPLYAYRCGHLHYTTGICSDVSPTFQVVNSIAPVQECSTQLDIVIVLDGSNSIYPWDSVTAFLNDLLERMDIGPKQTQVGIVQYGENVTHEFNLNKYSSTEEVLVAAKKIVQRGGRQTMTALGIDTARKEAFTEARGARRGVKKVMVIVTDGESHDNHRLKKVIQDCEDENIQRFSIAILGSYNRGNLSTEKFVEEIKSIASEPTEKHFFNVSDELALVTIVKTLGERIFALEATADQSAASFEMEMSQTGFSAHYSQDWVMLGAVGAYDWNGTVVMQKASQIIIPRNTTFNVESTKKNEPLASYLGYTVNSATASSGDVLYIAGQPRYNHTGQVIIYRMEDGNIKILQTLSGEQIGSYFGSILTTTDIDKDSNTDILLVGAPMYMGTEKEEQGKVYVYALNQTRFEYQMSLEPIKQTCCSSRQHNSCTTENKNEPCGARFGTAIAAVKDLNLDGFNDIVIGAPLEDDHGGAVYIYHGSGKTIRKEYAQRIPSGGDGKTLKFFGQSIHGEMDLNGDGLTDVTIGGLGGAALFWSRDVAVVKVTMNFEPNKVNIQKKNCHMEGKETVCINATVCFDVKLKSKEDTIYEADLQYRVTLDSLRQISRSFFSGTQERKVQRNITVRKSECTKHSFYMLDKHDFQDSVRITLDFNLTDPENGPVLDDSLPNSVHEYIPFAKDCGNKEKCISDLSLHVATTEKDLLIVRSQNDKFNVSLTVKNTKDSAYNTRTIVHYSPNLVFSGIEAIQKDSCESNHNITCKVGYPFLRRGEMVTFKILFQFNTSYLMENVTIYLSATSDSEEPPETLSDNVVNISIPVKYEVGLQFYSSASEYHISIAANETVPEVINSTEDIGNEINIFYLIRKSGSFPMPELKLSISFPNMTSNGYPVLYPTGLSSSENANCRPHIFEDPFSINSGKKMTTSTDHLKRGTILDCNTCKFATITCNLTSSDISQVNVSLILWKPTFIKSYFSSLNLTIRGELRSENASLVLSSSNQKRELAIQISKDGLPGRVPLWVILLSAFAGLLLLMLLILALWKIGFFKRPLKKKMEK</sequence>
<comment type="function">
    <text evidence="6">Integrin alpha-1/beta-1 is a receptor for laminin and collagen. It recognizes the proline-hydroxylated sequence G-F-P-G-E-R in collagen. Involved in anchorage-dependent, negative regulation of EGF-stimulated cell growth.</text>
</comment>
<comment type="subunit">
    <text evidence="6 8">Heterodimer of an alpha and a beta subunit. Alpha-1 associates with beta-1. Interacts with RAB21. Interacts (via cytoplasmic domain) with PTPN2; activates PTPN2 phosphatase activity towards EGFR and negatively regulates EGF signaling.</text>
</comment>
<comment type="interaction">
    <interactant intactId="EBI-2554465">
        <id>P56199</id>
    </interactant>
    <interactant intactId="EBI-15711650">
        <id>P04512</id>
    </interactant>
    <organismsDiffer>true</organismsDiffer>
    <experiments>2</experiments>
</comment>
<comment type="subcellular location">
    <subcellularLocation>
        <location>Membrane</location>
        <topology>Single-pass type I membrane protein</topology>
    </subcellularLocation>
</comment>
<comment type="domain">
    <text>The integrin I-domain (insert) is a VWFA domain. Integrins with I-domains do not undergo protease cleavage.</text>
</comment>
<comment type="similarity">
    <text evidence="10">Belongs to the integrin alpha chain family.</text>
</comment>
<keyword id="KW-0002">3D-structure</keyword>
<keyword id="KW-0106">Calcium</keyword>
<keyword id="KW-0130">Cell adhesion</keyword>
<keyword id="KW-1015">Disulfide bond</keyword>
<keyword id="KW-0325">Glycoprotein</keyword>
<keyword id="KW-0401">Integrin</keyword>
<keyword id="KW-0460">Magnesium</keyword>
<keyword id="KW-0472">Membrane</keyword>
<keyword id="KW-0479">Metal-binding</keyword>
<keyword id="KW-1267">Proteomics identification</keyword>
<keyword id="KW-0675">Receptor</keyword>
<keyword id="KW-1185">Reference proteome</keyword>
<keyword id="KW-0677">Repeat</keyword>
<keyword id="KW-0732">Signal</keyword>
<keyword id="KW-0812">Transmembrane</keyword>
<keyword id="KW-1133">Transmembrane helix</keyword>
<name>ITA1_HUMAN</name>
<organism>
    <name type="scientific">Homo sapiens</name>
    <name type="common">Human</name>
    <dbReference type="NCBI Taxonomy" id="9606"/>
    <lineage>
        <taxon>Eukaryota</taxon>
        <taxon>Metazoa</taxon>
        <taxon>Chordata</taxon>
        <taxon>Craniata</taxon>
        <taxon>Vertebrata</taxon>
        <taxon>Euteleostomi</taxon>
        <taxon>Mammalia</taxon>
        <taxon>Eutheria</taxon>
        <taxon>Euarchontoglires</taxon>
        <taxon>Primates</taxon>
        <taxon>Haplorrhini</taxon>
        <taxon>Catarrhini</taxon>
        <taxon>Hominidae</taxon>
        <taxon>Homo</taxon>
    </lineage>
</organism>
<reference key="1">
    <citation type="journal article" date="2004" name="Nature">
        <title>The DNA sequence and comparative analysis of human chromosome 5.</title>
        <authorList>
            <person name="Schmutz J."/>
            <person name="Martin J."/>
            <person name="Terry A."/>
            <person name="Couronne O."/>
            <person name="Grimwood J."/>
            <person name="Lowry S."/>
            <person name="Gordon L.A."/>
            <person name="Scott D."/>
            <person name="Xie G."/>
            <person name="Huang W."/>
            <person name="Hellsten U."/>
            <person name="Tran-Gyamfi M."/>
            <person name="She X."/>
            <person name="Prabhakar S."/>
            <person name="Aerts A."/>
            <person name="Altherr M."/>
            <person name="Bajorek E."/>
            <person name="Black S."/>
            <person name="Branscomb E."/>
            <person name="Caoile C."/>
            <person name="Challacombe J.F."/>
            <person name="Chan Y.M."/>
            <person name="Denys M."/>
            <person name="Detter J.C."/>
            <person name="Escobar J."/>
            <person name="Flowers D."/>
            <person name="Fotopulos D."/>
            <person name="Glavina T."/>
            <person name="Gomez M."/>
            <person name="Gonzales E."/>
            <person name="Goodstein D."/>
            <person name="Grigoriev I."/>
            <person name="Groza M."/>
            <person name="Hammon N."/>
            <person name="Hawkins T."/>
            <person name="Haydu L."/>
            <person name="Israni S."/>
            <person name="Jett J."/>
            <person name="Kadner K."/>
            <person name="Kimball H."/>
            <person name="Kobayashi A."/>
            <person name="Lopez F."/>
            <person name="Lou Y."/>
            <person name="Martinez D."/>
            <person name="Medina C."/>
            <person name="Morgan J."/>
            <person name="Nandkeshwar R."/>
            <person name="Noonan J.P."/>
            <person name="Pitluck S."/>
            <person name="Pollard M."/>
            <person name="Predki P."/>
            <person name="Priest J."/>
            <person name="Ramirez L."/>
            <person name="Retterer J."/>
            <person name="Rodriguez A."/>
            <person name="Rogers S."/>
            <person name="Salamov A."/>
            <person name="Salazar A."/>
            <person name="Thayer N."/>
            <person name="Tice H."/>
            <person name="Tsai M."/>
            <person name="Ustaszewska A."/>
            <person name="Vo N."/>
            <person name="Wheeler J."/>
            <person name="Wu K."/>
            <person name="Yang J."/>
            <person name="Dickson M."/>
            <person name="Cheng J.-F."/>
            <person name="Eichler E.E."/>
            <person name="Olsen A."/>
            <person name="Pennacchio L.A."/>
            <person name="Rokhsar D.S."/>
            <person name="Richardson P."/>
            <person name="Lucas S.M."/>
            <person name="Myers R.M."/>
            <person name="Rubin E.M."/>
        </authorList>
    </citation>
    <scope>NUCLEOTIDE SEQUENCE [LARGE SCALE GENOMIC DNA]</scope>
</reference>
<reference key="2">
    <citation type="journal article" date="2004" name="Genome Res.">
        <title>The status, quality, and expansion of the NIH full-length cDNA project: the Mammalian Gene Collection (MGC).</title>
        <authorList>
            <consortium name="The MGC Project Team"/>
        </authorList>
    </citation>
    <scope>NUCLEOTIDE SEQUENCE [LARGE SCALE MRNA]</scope>
    <source>
        <tissue>Brain</tissue>
    </source>
</reference>
<reference key="3">
    <citation type="journal article" date="1993" name="J. Biol. Chem.">
        <title>Expression of native and truncated forms of the human integrin alpha 1 subunit.</title>
        <authorList>
            <person name="Briesewitz R."/>
            <person name="Epstein M.R."/>
            <person name="Marcantonio E.E."/>
        </authorList>
    </citation>
    <scope>NUCLEOTIDE SEQUENCE [MRNA] OF 29-1179</scope>
</reference>
<reference key="4">
    <citation type="journal article" date="2005" name="J. Proteome Res.">
        <title>Human plasma N-glycoproteome analysis by immunoaffinity subtraction, hydrazide chemistry, and mass spectrometry.</title>
        <authorList>
            <person name="Liu T."/>
            <person name="Qian W.-J."/>
            <person name="Gritsenko M.A."/>
            <person name="Camp D.G. II"/>
            <person name="Monroe M.E."/>
            <person name="Moore R.J."/>
            <person name="Smith R.D."/>
        </authorList>
    </citation>
    <scope>GLYCOSYLATION [LARGE SCALE ANALYSIS] AT ASN-532</scope>
    <source>
        <tissue>Plasma</tissue>
    </source>
</reference>
<reference key="5">
    <citation type="journal article" date="2005" name="Nat. Cell Biol.">
        <title>Negative regulation of EGFR signalling through integrin-alpha1beta1-mediated activation of protein tyrosine phosphatase TCPTP.</title>
        <authorList>
            <person name="Mattila E."/>
            <person name="Pellinen T."/>
            <person name="Nevo J."/>
            <person name="Vuoriluoto K."/>
            <person name="Arjonen A."/>
            <person name="Ivaska J."/>
        </authorList>
    </citation>
    <scope>FUNCTION IN EGFR SIGNALING</scope>
    <scope>INTERACTION WITH PTPN2</scope>
</reference>
<reference key="6">
    <citation type="journal article" date="2006" name="J. Cell Biol.">
        <title>Small GTPase Rab21 regulates cell adhesion and controls endosomal traffic of beta1-integrins.</title>
        <authorList>
            <person name="Pellinen T."/>
            <person name="Arjonen A."/>
            <person name="Vuoriluoto K."/>
            <person name="Kallio K."/>
            <person name="Fransen J.A.M."/>
            <person name="Ivaska J."/>
        </authorList>
    </citation>
    <scope>INTERACTION WITH RAB21</scope>
</reference>
<reference key="7">
    <citation type="journal article" date="2009" name="J. Proteome Res.">
        <title>Glycoproteomics analysis of human liver tissue by combination of multiple enzyme digestion and hydrazide chemistry.</title>
        <authorList>
            <person name="Chen R."/>
            <person name="Jiang X."/>
            <person name="Sun D."/>
            <person name="Han G."/>
            <person name="Wang F."/>
            <person name="Ye M."/>
            <person name="Wang L."/>
            <person name="Zou H."/>
        </authorList>
    </citation>
    <scope>GLYCOSYLATION [LARGE SCALE ANALYSIS] AT ASN-100; ASN-105; ASN-217; ASN-341; ASN-418; ASN-460; ASN-532; ASN-780; ASN-840; ASN-966; ASN-974 AND ASN-1008</scope>
    <source>
        <tissue>Liver</tissue>
    </source>
</reference>
<reference key="8">
    <citation type="journal article" date="2011" name="BMC Syst. Biol.">
        <title>Initial characterization of the human central proteome.</title>
        <authorList>
            <person name="Burkard T.R."/>
            <person name="Planyavsky M."/>
            <person name="Kaupe I."/>
            <person name="Breitwieser F.P."/>
            <person name="Buerckstuemmer T."/>
            <person name="Bennett K.L."/>
            <person name="Superti-Furga G."/>
            <person name="Colinge J."/>
        </authorList>
    </citation>
    <scope>IDENTIFICATION BY MASS SPECTROMETRY [LARGE SCALE ANALYSIS]</scope>
</reference>
<reference key="9">
    <citation type="journal article" date="2014" name="J. Proteomics">
        <title>An enzyme assisted RP-RPLC approach for in-depth analysis of human liver phosphoproteome.</title>
        <authorList>
            <person name="Bian Y."/>
            <person name="Song C."/>
            <person name="Cheng K."/>
            <person name="Dong M."/>
            <person name="Wang F."/>
            <person name="Huang J."/>
            <person name="Sun D."/>
            <person name="Wang L."/>
            <person name="Ye M."/>
            <person name="Zou H."/>
        </authorList>
    </citation>
    <scope>IDENTIFICATION BY MASS SPECTROMETRY [LARGE SCALE ANALYSIS]</scope>
    <source>
        <tissue>Liver</tissue>
    </source>
</reference>
<reference key="10">
    <citation type="journal article" date="1999" name="J. Biol. Chem.">
        <title>Trench-shaped binding sites promote multiple classes of interactions between collagen and the adherence receptors, alpha(1)beta(1) integrin and Staphylococcus aureus cna MSCRAMM.</title>
        <authorList>
            <person name="Rich R.L."/>
            <person name="Deivanayagam C.C."/>
            <person name="Owens R.T."/>
            <person name="Carson M."/>
            <person name="Hook A."/>
            <person name="Moore D."/>
            <person name="Symersky J."/>
            <person name="Yang V.W."/>
            <person name="Narayana S.V."/>
            <person name="Hook M."/>
        </authorList>
    </citation>
    <scope>X-RAY CRYSTALLOGRAPHY (2.0 ANGSTROMS) OF 168-359</scope>
</reference>
<reference key="11">
    <citation type="journal article" date="2004" name="J. Biol. Chem.">
        <title>Jararhagin-derived RKKH peptides induce structural changes in alpha1I domain of human integrin alpha1beta1.</title>
        <authorList>
            <person name="Nymalm Y."/>
            <person name="Puranen J.S."/>
            <person name="Nyholm T.K."/>
            <person name="Kapyla J."/>
            <person name="Kidron H."/>
            <person name="Pentikainen O.T."/>
            <person name="Airenne T.T."/>
            <person name="Heino J."/>
            <person name="Slotte J.P."/>
            <person name="Johnson M.S."/>
            <person name="Salminen T.A."/>
        </authorList>
    </citation>
    <scope>X-RAY CRYSTALLOGRAPHY (1.87 ANGSTROMS) OF 166-356</scope>
</reference>
<dbReference type="EMBL" id="AC027326">
    <property type="status" value="NOT_ANNOTATED_CDS"/>
    <property type="molecule type" value="Genomic_DNA"/>
</dbReference>
<dbReference type="EMBL" id="AC022133">
    <property type="status" value="NOT_ANNOTATED_CDS"/>
    <property type="molecule type" value="Genomic_DNA"/>
</dbReference>
<dbReference type="EMBL" id="AC025180">
    <property type="status" value="NOT_ANNOTATED_CDS"/>
    <property type="molecule type" value="Genomic_DNA"/>
</dbReference>
<dbReference type="EMBL" id="BC137121">
    <property type="protein sequence ID" value="AAI37122.1"/>
    <property type="molecule type" value="mRNA"/>
</dbReference>
<dbReference type="EMBL" id="BC137122">
    <property type="protein sequence ID" value="AAI37123.1"/>
    <property type="molecule type" value="mRNA"/>
</dbReference>
<dbReference type="EMBL" id="X68742">
    <property type="status" value="NOT_ANNOTATED_CDS"/>
    <property type="molecule type" value="mRNA"/>
</dbReference>
<dbReference type="CCDS" id="CCDS3955.1"/>
<dbReference type="PIR" id="A45226">
    <property type="entry name" value="A45226"/>
</dbReference>
<dbReference type="RefSeq" id="NP_852478.1">
    <property type="nucleotide sequence ID" value="NM_181501.2"/>
</dbReference>
<dbReference type="PDB" id="1PT6">
    <property type="method" value="X-ray"/>
    <property type="resolution" value="1.87 A"/>
    <property type="chains" value="A/B=166-366"/>
</dbReference>
<dbReference type="PDB" id="1QC5">
    <property type="method" value="X-ray"/>
    <property type="resolution" value="2.00 A"/>
    <property type="chains" value="A/B=168-359"/>
</dbReference>
<dbReference type="PDB" id="1QCY">
    <property type="method" value="X-ray"/>
    <property type="resolution" value="2.30 A"/>
    <property type="chains" value="A=169-361"/>
</dbReference>
<dbReference type="PDB" id="2L8S">
    <property type="method" value="NMR"/>
    <property type="chains" value="A=1135-1179"/>
</dbReference>
<dbReference type="PDB" id="2M32">
    <property type="method" value="NMR"/>
    <property type="chains" value="A=168-359"/>
</dbReference>
<dbReference type="PDB" id="4A0Q">
    <property type="method" value="X-ray"/>
    <property type="resolution" value="1.90 A"/>
    <property type="chains" value="A/B=166-366"/>
</dbReference>
<dbReference type="PDB" id="5HGJ">
    <property type="method" value="X-ray"/>
    <property type="resolution" value="1.40 A"/>
    <property type="chains" value="A/B=170-364"/>
</dbReference>
<dbReference type="PDBsum" id="1PT6"/>
<dbReference type="PDBsum" id="1QC5"/>
<dbReference type="PDBsum" id="1QCY"/>
<dbReference type="PDBsum" id="2L8S"/>
<dbReference type="PDBsum" id="2M32"/>
<dbReference type="PDBsum" id="4A0Q"/>
<dbReference type="PDBsum" id="5HGJ"/>
<dbReference type="BMRB" id="P56199"/>
<dbReference type="SMR" id="P56199"/>
<dbReference type="BioGRID" id="109879">
    <property type="interactions" value="49"/>
</dbReference>
<dbReference type="ComplexPortal" id="CPX-1798">
    <property type="entry name" value="Integrin alpha1-beta1 complex"/>
</dbReference>
<dbReference type="CORUM" id="P56199"/>
<dbReference type="DIP" id="DIP-206N"/>
<dbReference type="FunCoup" id="P56199">
    <property type="interactions" value="1118"/>
</dbReference>
<dbReference type="IntAct" id="P56199">
    <property type="interactions" value="25"/>
</dbReference>
<dbReference type="MINT" id="P56199"/>
<dbReference type="STRING" id="9606.ENSP00000282588"/>
<dbReference type="BindingDB" id="P56199"/>
<dbReference type="ChEMBL" id="CHEMBL3682"/>
<dbReference type="GuidetoPHARMACOLOGY" id="2437"/>
<dbReference type="TCDB" id="8.A.54.1.1">
    <property type="family name" value="the integrin (integrin) family"/>
</dbReference>
<dbReference type="GlyConnect" id="1405">
    <property type="glycosylation" value="8 N-Linked glycans (4 sites)"/>
</dbReference>
<dbReference type="GlyCosmos" id="P56199">
    <property type="glycosylation" value="26 sites, 7 glycans"/>
</dbReference>
<dbReference type="GlyGen" id="P56199">
    <property type="glycosylation" value="29 sites, 112 N-linked glycans (15 sites), 1 O-linked glycan (3 sites)"/>
</dbReference>
<dbReference type="iPTMnet" id="P56199"/>
<dbReference type="PhosphoSitePlus" id="P56199"/>
<dbReference type="BioMuta" id="ITGA1"/>
<dbReference type="DMDM" id="124056463"/>
<dbReference type="CPTAC" id="CPTAC-1614"/>
<dbReference type="jPOST" id="P56199"/>
<dbReference type="MassIVE" id="P56199"/>
<dbReference type="PaxDb" id="9606-ENSP00000282588"/>
<dbReference type="PeptideAtlas" id="P56199"/>
<dbReference type="ProteomicsDB" id="56903"/>
<dbReference type="Pumba" id="P56199"/>
<dbReference type="ABCD" id="P56199">
    <property type="antibodies" value="9 sequenced antibodies"/>
</dbReference>
<dbReference type="Antibodypedia" id="10955">
    <property type="antibodies" value="605 antibodies from 39 providers"/>
</dbReference>
<dbReference type="DNASU" id="3672"/>
<dbReference type="Ensembl" id="ENST00000282588.7">
    <property type="protein sequence ID" value="ENSP00000282588.5"/>
    <property type="gene ID" value="ENSG00000213949.10"/>
</dbReference>
<dbReference type="GeneID" id="3672"/>
<dbReference type="KEGG" id="hsa:3672"/>
<dbReference type="MANE-Select" id="ENST00000282588.7">
    <property type="protein sequence ID" value="ENSP00000282588.5"/>
    <property type="RefSeq nucleotide sequence ID" value="NM_181501.2"/>
    <property type="RefSeq protein sequence ID" value="NP_852478.1"/>
</dbReference>
<dbReference type="UCSC" id="uc003jou.4">
    <property type="organism name" value="human"/>
</dbReference>
<dbReference type="AGR" id="HGNC:6134"/>
<dbReference type="CTD" id="3672"/>
<dbReference type="DisGeNET" id="3672"/>
<dbReference type="GeneCards" id="ITGA1"/>
<dbReference type="HGNC" id="HGNC:6134">
    <property type="gene designation" value="ITGA1"/>
</dbReference>
<dbReference type="HPA" id="ENSG00000213949">
    <property type="expression patterns" value="Tissue enhanced (intestine)"/>
</dbReference>
<dbReference type="MalaCards" id="ITGA1"/>
<dbReference type="MIM" id="192968">
    <property type="type" value="gene"/>
</dbReference>
<dbReference type="neXtProt" id="NX_P56199"/>
<dbReference type="OpenTargets" id="ENSG00000213949"/>
<dbReference type="PharmGKB" id="PA29935"/>
<dbReference type="VEuPathDB" id="HostDB:ENSG00000213949"/>
<dbReference type="eggNOG" id="KOG3637">
    <property type="taxonomic scope" value="Eukaryota"/>
</dbReference>
<dbReference type="GeneTree" id="ENSGT00940000157646"/>
<dbReference type="HOGENOM" id="CLU_004111_2_1_1"/>
<dbReference type="InParanoid" id="P56199"/>
<dbReference type="OMA" id="TCCSLLK"/>
<dbReference type="OrthoDB" id="5317514at2759"/>
<dbReference type="PAN-GO" id="P56199">
    <property type="GO annotations" value="7 GO annotations based on evolutionary models"/>
</dbReference>
<dbReference type="PhylomeDB" id="P56199"/>
<dbReference type="TreeFam" id="TF105391"/>
<dbReference type="PathwayCommons" id="P56199"/>
<dbReference type="Reactome" id="R-HSA-216083">
    <property type="pathway name" value="Integrin cell surface interactions"/>
</dbReference>
<dbReference type="Reactome" id="R-HSA-3000157">
    <property type="pathway name" value="Laminin interactions"/>
</dbReference>
<dbReference type="Reactome" id="R-HSA-416700">
    <property type="pathway name" value="Other semaphorin interactions"/>
</dbReference>
<dbReference type="Reactome" id="R-HSA-445355">
    <property type="pathway name" value="Smooth Muscle Contraction"/>
</dbReference>
<dbReference type="Reactome" id="R-HSA-447041">
    <property type="pathway name" value="CHL1 interactions"/>
</dbReference>
<dbReference type="Reactome" id="R-HSA-75892">
    <property type="pathway name" value="Platelet Adhesion to exposed collagen"/>
</dbReference>
<dbReference type="SignaLink" id="P56199"/>
<dbReference type="SIGNOR" id="P56199"/>
<dbReference type="BioGRID-ORCS" id="3672">
    <property type="hits" value="15 hits in 1153 CRISPR screens"/>
</dbReference>
<dbReference type="ChiTaRS" id="ITGA1">
    <property type="organism name" value="human"/>
</dbReference>
<dbReference type="EvolutionaryTrace" id="P56199"/>
<dbReference type="GeneWiki" id="CD49a"/>
<dbReference type="GenomeRNAi" id="3672"/>
<dbReference type="Pharos" id="P56199">
    <property type="development level" value="Tbio"/>
</dbReference>
<dbReference type="PRO" id="PR:P56199"/>
<dbReference type="Proteomes" id="UP000005640">
    <property type="component" value="Chromosome 5"/>
</dbReference>
<dbReference type="RNAct" id="P56199">
    <property type="molecule type" value="protein"/>
</dbReference>
<dbReference type="Bgee" id="ENSG00000213949">
    <property type="expression patterns" value="Expressed in calcaneal tendon and 184 other cell types or tissues"/>
</dbReference>
<dbReference type="ExpressionAtlas" id="P56199">
    <property type="expression patterns" value="baseline and differential"/>
</dbReference>
<dbReference type="GO" id="GO:0001669">
    <property type="term" value="C:acrosomal vesicle"/>
    <property type="evidence" value="ECO:0007669"/>
    <property type="project" value="Ensembl"/>
</dbReference>
<dbReference type="GO" id="GO:0045178">
    <property type="term" value="C:basal part of cell"/>
    <property type="evidence" value="ECO:0007669"/>
    <property type="project" value="Ensembl"/>
</dbReference>
<dbReference type="GO" id="GO:0009986">
    <property type="term" value="C:cell surface"/>
    <property type="evidence" value="ECO:0000314"/>
    <property type="project" value="UniProtKB"/>
</dbReference>
<dbReference type="GO" id="GO:0009897">
    <property type="term" value="C:external side of plasma membrane"/>
    <property type="evidence" value="ECO:0000318"/>
    <property type="project" value="GO_Central"/>
</dbReference>
<dbReference type="GO" id="GO:0070062">
    <property type="term" value="C:extracellular exosome"/>
    <property type="evidence" value="ECO:0007005"/>
    <property type="project" value="UniProtKB"/>
</dbReference>
<dbReference type="GO" id="GO:0005925">
    <property type="term" value="C:focal adhesion"/>
    <property type="evidence" value="ECO:0000314"/>
    <property type="project" value="UniProtKB"/>
</dbReference>
<dbReference type="GO" id="GO:0034665">
    <property type="term" value="C:integrin alpha1-beta1 complex"/>
    <property type="evidence" value="ECO:0000314"/>
    <property type="project" value="UniProtKB"/>
</dbReference>
<dbReference type="GO" id="GO:0008305">
    <property type="term" value="C:integrin complex"/>
    <property type="evidence" value="ECO:0000318"/>
    <property type="project" value="GO_Central"/>
</dbReference>
<dbReference type="GO" id="GO:0016020">
    <property type="term" value="C:membrane"/>
    <property type="evidence" value="ECO:0007005"/>
    <property type="project" value="UniProtKB"/>
</dbReference>
<dbReference type="GO" id="GO:0043204">
    <property type="term" value="C:perikaryon"/>
    <property type="evidence" value="ECO:0007669"/>
    <property type="project" value="Ensembl"/>
</dbReference>
<dbReference type="GO" id="GO:0005886">
    <property type="term" value="C:plasma membrane"/>
    <property type="evidence" value="ECO:0000304"/>
    <property type="project" value="Reactome"/>
</dbReference>
<dbReference type="GO" id="GO:0005518">
    <property type="term" value="F:collagen binding"/>
    <property type="evidence" value="ECO:0000304"/>
    <property type="project" value="UniProtKB"/>
</dbReference>
<dbReference type="GO" id="GO:0098639">
    <property type="term" value="F:collagen binding involved in cell-matrix adhesion"/>
    <property type="evidence" value="ECO:0000315"/>
    <property type="project" value="UniProtKB"/>
</dbReference>
<dbReference type="GO" id="GO:0005178">
    <property type="term" value="F:integrin binding"/>
    <property type="evidence" value="ECO:0000318"/>
    <property type="project" value="GO_Central"/>
</dbReference>
<dbReference type="GO" id="GO:0046872">
    <property type="term" value="F:metal ion binding"/>
    <property type="evidence" value="ECO:0007669"/>
    <property type="project" value="UniProtKB-KW"/>
</dbReference>
<dbReference type="GO" id="GO:0019211">
    <property type="term" value="F:phosphatase activator activity"/>
    <property type="evidence" value="ECO:0000314"/>
    <property type="project" value="UniProtKB"/>
</dbReference>
<dbReference type="GO" id="GO:0019903">
    <property type="term" value="F:protein phosphatase binding"/>
    <property type="evidence" value="ECO:0000353"/>
    <property type="project" value="UniProtKB"/>
</dbReference>
<dbReference type="GO" id="GO:0033627">
    <property type="term" value="P:cell adhesion mediated by integrin"/>
    <property type="evidence" value="ECO:0000318"/>
    <property type="project" value="GO_Central"/>
</dbReference>
<dbReference type="GO" id="GO:0098609">
    <property type="term" value="P:cell-cell adhesion"/>
    <property type="evidence" value="ECO:0000318"/>
    <property type="project" value="GO_Central"/>
</dbReference>
<dbReference type="GO" id="GO:0007160">
    <property type="term" value="P:cell-matrix adhesion"/>
    <property type="evidence" value="ECO:0000315"/>
    <property type="project" value="UniProtKB"/>
</dbReference>
<dbReference type="GO" id="GO:0045123">
    <property type="term" value="P:cellular extravasation"/>
    <property type="evidence" value="ECO:0007669"/>
    <property type="project" value="Ensembl"/>
</dbReference>
<dbReference type="GO" id="GO:0007229">
    <property type="term" value="P:integrin-mediated signaling pathway"/>
    <property type="evidence" value="ECO:0000318"/>
    <property type="project" value="GO_Central"/>
</dbReference>
<dbReference type="GO" id="GO:0008285">
    <property type="term" value="P:negative regulation of cell population proliferation"/>
    <property type="evidence" value="ECO:0000315"/>
    <property type="project" value="UniProtKB"/>
</dbReference>
<dbReference type="GO" id="GO:0042059">
    <property type="term" value="P:negative regulation of epidermal growth factor receptor signaling pathway"/>
    <property type="evidence" value="ECO:0000250"/>
    <property type="project" value="UniProtKB"/>
</dbReference>
<dbReference type="GO" id="GO:0048812">
    <property type="term" value="P:neuron projection morphogenesis"/>
    <property type="evidence" value="ECO:0007669"/>
    <property type="project" value="Ensembl"/>
</dbReference>
<dbReference type="GO" id="GO:0030593">
    <property type="term" value="P:neutrophil chemotaxis"/>
    <property type="evidence" value="ECO:0007669"/>
    <property type="project" value="Ensembl"/>
</dbReference>
<dbReference type="GO" id="GO:0043410">
    <property type="term" value="P:positive regulation of MAPK cascade"/>
    <property type="evidence" value="ECO:0007669"/>
    <property type="project" value="Ensembl"/>
</dbReference>
<dbReference type="GO" id="GO:0043525">
    <property type="term" value="P:positive regulation of neuron apoptotic process"/>
    <property type="evidence" value="ECO:0007669"/>
    <property type="project" value="Ensembl"/>
</dbReference>
<dbReference type="GO" id="GO:0042311">
    <property type="term" value="P:vasodilation"/>
    <property type="evidence" value="ECO:0007669"/>
    <property type="project" value="Ensembl"/>
</dbReference>
<dbReference type="CDD" id="cd01469">
    <property type="entry name" value="vWA_integrins_alpha_subunit"/>
    <property type="match status" value="1"/>
</dbReference>
<dbReference type="FunFam" id="2.60.40.1510:FF:000016">
    <property type="entry name" value="Integrin subunit alpha 1"/>
    <property type="match status" value="1"/>
</dbReference>
<dbReference type="FunFam" id="2.60.40.1530:FF:000011">
    <property type="entry name" value="Integrin subunit alpha 1"/>
    <property type="match status" value="1"/>
</dbReference>
<dbReference type="FunFam" id="2.130.10.130:FF:000001">
    <property type="entry name" value="Integrin subunit alpha 10"/>
    <property type="match status" value="1"/>
</dbReference>
<dbReference type="FunFam" id="3.40.50.410:FF:000012">
    <property type="entry name" value="Integrin, alpha 10"/>
    <property type="match status" value="1"/>
</dbReference>
<dbReference type="FunFam" id="2.60.40.1460:FF:000001">
    <property type="entry name" value="Integrin, alpha V"/>
    <property type="match status" value="1"/>
</dbReference>
<dbReference type="Gene3D" id="1.20.5.930">
    <property type="entry name" value="Bicelle-embedded integrin alpha(iib) transmembrane segment"/>
    <property type="match status" value="1"/>
</dbReference>
<dbReference type="Gene3D" id="2.130.10.130">
    <property type="entry name" value="Integrin alpha, N-terminal"/>
    <property type="match status" value="1"/>
</dbReference>
<dbReference type="Gene3D" id="2.60.40.1460">
    <property type="entry name" value="Integrin domains. Chain A, domain 2"/>
    <property type="match status" value="1"/>
</dbReference>
<dbReference type="Gene3D" id="2.60.40.1510">
    <property type="entry name" value="ntegrin, alpha v. Chain A, domain 3"/>
    <property type="match status" value="1"/>
</dbReference>
<dbReference type="Gene3D" id="2.60.40.1530">
    <property type="entry name" value="ntegrin, alpha v. Chain A, domain 4"/>
    <property type="match status" value="1"/>
</dbReference>
<dbReference type="Gene3D" id="3.40.50.410">
    <property type="entry name" value="von Willebrand factor, type A domain"/>
    <property type="match status" value="1"/>
</dbReference>
<dbReference type="InterPro" id="IPR013517">
    <property type="entry name" value="FG-GAP"/>
</dbReference>
<dbReference type="InterPro" id="IPR013519">
    <property type="entry name" value="Int_alpha_beta-p"/>
</dbReference>
<dbReference type="InterPro" id="IPR000413">
    <property type="entry name" value="Integrin_alpha"/>
</dbReference>
<dbReference type="InterPro" id="IPR018184">
    <property type="entry name" value="Integrin_alpha_C_CS"/>
</dbReference>
<dbReference type="InterPro" id="IPR013649">
    <property type="entry name" value="Integrin_alpha_Ig-like_1"/>
</dbReference>
<dbReference type="InterPro" id="IPR048285">
    <property type="entry name" value="Integrin_alpha_Ig-like_2"/>
</dbReference>
<dbReference type="InterPro" id="IPR048286">
    <property type="entry name" value="Integrin_alpha_Ig-like_3"/>
</dbReference>
<dbReference type="InterPro" id="IPR028994">
    <property type="entry name" value="Integrin_alpha_N"/>
</dbReference>
<dbReference type="InterPro" id="IPR032695">
    <property type="entry name" value="Integrin_dom_sf"/>
</dbReference>
<dbReference type="InterPro" id="IPR002035">
    <property type="entry name" value="VWF_A"/>
</dbReference>
<dbReference type="InterPro" id="IPR036465">
    <property type="entry name" value="vWFA_dom_sf"/>
</dbReference>
<dbReference type="PANTHER" id="PTHR23220">
    <property type="entry name" value="INTEGRIN ALPHA"/>
    <property type="match status" value="1"/>
</dbReference>
<dbReference type="PANTHER" id="PTHR23220:SF22">
    <property type="entry name" value="INTEGRIN ALPHA-1"/>
    <property type="match status" value="1"/>
</dbReference>
<dbReference type="Pfam" id="PF01839">
    <property type="entry name" value="FG-GAP"/>
    <property type="match status" value="2"/>
</dbReference>
<dbReference type="Pfam" id="PF08441">
    <property type="entry name" value="Integrin_A_Ig_1"/>
    <property type="match status" value="1"/>
</dbReference>
<dbReference type="Pfam" id="PF20805">
    <property type="entry name" value="Integrin_A_Ig_2"/>
    <property type="match status" value="1"/>
</dbReference>
<dbReference type="Pfam" id="PF20806">
    <property type="entry name" value="Integrin_A_Ig_3"/>
    <property type="match status" value="1"/>
</dbReference>
<dbReference type="Pfam" id="PF00092">
    <property type="entry name" value="VWA"/>
    <property type="match status" value="1"/>
</dbReference>
<dbReference type="PRINTS" id="PR01185">
    <property type="entry name" value="INTEGRINA"/>
</dbReference>
<dbReference type="PRINTS" id="PR00453">
    <property type="entry name" value="VWFADOMAIN"/>
</dbReference>
<dbReference type="SMART" id="SM00191">
    <property type="entry name" value="Int_alpha"/>
    <property type="match status" value="5"/>
</dbReference>
<dbReference type="SMART" id="SM00327">
    <property type="entry name" value="VWA"/>
    <property type="match status" value="1"/>
</dbReference>
<dbReference type="SUPFAM" id="SSF69318">
    <property type="entry name" value="Integrin alpha N-terminal domain"/>
    <property type="match status" value="1"/>
</dbReference>
<dbReference type="SUPFAM" id="SSF69179">
    <property type="entry name" value="Integrin domains"/>
    <property type="match status" value="3"/>
</dbReference>
<dbReference type="SUPFAM" id="SSF53300">
    <property type="entry name" value="vWA-like"/>
    <property type="match status" value="1"/>
</dbReference>
<dbReference type="PROSITE" id="PS51470">
    <property type="entry name" value="FG_GAP"/>
    <property type="match status" value="7"/>
</dbReference>
<dbReference type="PROSITE" id="PS00242">
    <property type="entry name" value="INTEGRIN_ALPHA"/>
    <property type="match status" value="1"/>
</dbReference>
<dbReference type="PROSITE" id="PS50234">
    <property type="entry name" value="VWFA"/>
    <property type="match status" value="1"/>
</dbReference>